<feature type="chain" id="PRO_0000062236" description="Large ribosomal subunit protein uL16">
    <location>
        <begin position="1"/>
        <end position="141"/>
    </location>
</feature>
<feature type="strand" evidence="4">
    <location>
        <begin position="19"/>
        <end position="23"/>
    </location>
</feature>
<feature type="strand" evidence="4">
    <location>
        <begin position="29"/>
        <end position="38"/>
    </location>
</feature>
<feature type="strand" evidence="4">
    <location>
        <begin position="40"/>
        <end position="43"/>
    </location>
</feature>
<feature type="helix" evidence="4">
    <location>
        <begin position="44"/>
        <end position="57"/>
    </location>
</feature>
<feature type="strand" evidence="3">
    <location>
        <begin position="58"/>
        <end position="60"/>
    </location>
</feature>
<feature type="strand" evidence="4">
    <location>
        <begin position="63"/>
        <end position="66"/>
    </location>
</feature>
<feature type="strand" evidence="5">
    <location>
        <begin position="72"/>
        <end position="75"/>
    </location>
</feature>
<feature type="strand" evidence="4">
    <location>
        <begin position="82"/>
        <end position="85"/>
    </location>
</feature>
<feature type="strand" evidence="4">
    <location>
        <begin position="93"/>
        <end position="97"/>
    </location>
</feature>
<feature type="strand" evidence="4">
    <location>
        <begin position="102"/>
        <end position="109"/>
    </location>
</feature>
<feature type="helix" evidence="4">
    <location>
        <begin position="111"/>
        <end position="122"/>
    </location>
</feature>
<feature type="strand" evidence="4">
    <location>
        <begin position="125"/>
        <end position="127"/>
    </location>
</feature>
<feature type="strand" evidence="4">
    <location>
        <begin position="129"/>
        <end position="132"/>
    </location>
</feature>
<evidence type="ECO:0000255" key="1">
    <source>
        <dbReference type="HAMAP-Rule" id="MF_01342"/>
    </source>
</evidence>
<evidence type="ECO:0000305" key="2"/>
<evidence type="ECO:0007829" key="3">
    <source>
        <dbReference type="PDB" id="4V63"/>
    </source>
</evidence>
<evidence type="ECO:0007829" key="4">
    <source>
        <dbReference type="PDB" id="4V67"/>
    </source>
</evidence>
<evidence type="ECO:0007829" key="5">
    <source>
        <dbReference type="PDB" id="4V9K"/>
    </source>
</evidence>
<sequence length="141" mass="15947">MLMPRRMKYRKQQRGRLKGATKGGDYVAFGDFGLVALEPAWITAQQIEAARVAMVRHFRRGGKIFIRIFPDKPYTKKPLEVRMGKGKGNVEGYVAVVKPGRVMFEVAGVTEEQAMEALRIAGHKLPIKTKIVRRDAYDEAQ</sequence>
<dbReference type="EMBL" id="AE017221">
    <property type="protein sequence ID" value="AAS81663.1"/>
    <property type="molecule type" value="Genomic_DNA"/>
</dbReference>
<dbReference type="RefSeq" id="WP_011173709.1">
    <property type="nucleotide sequence ID" value="NC_005835.1"/>
</dbReference>
<dbReference type="PDB" id="4V4I">
    <property type="method" value="X-ray"/>
    <property type="resolution" value="3.71 A"/>
    <property type="chains" value="K=1-141"/>
</dbReference>
<dbReference type="PDB" id="4V4J">
    <property type="method" value="X-ray"/>
    <property type="resolution" value="3.83 A"/>
    <property type="chains" value="K=1-141"/>
</dbReference>
<dbReference type="PDB" id="4V63">
    <property type="method" value="X-ray"/>
    <property type="resolution" value="3.21 A"/>
    <property type="chains" value="BQ/DQ=1-141"/>
</dbReference>
<dbReference type="PDB" id="4V67">
    <property type="method" value="X-ray"/>
    <property type="resolution" value="3.00 A"/>
    <property type="chains" value="BQ/DQ=1-141"/>
</dbReference>
<dbReference type="PDB" id="4V7P">
    <property type="method" value="X-ray"/>
    <property type="resolution" value="3.62 A"/>
    <property type="chains" value="BM/CM=1-141"/>
</dbReference>
<dbReference type="PDB" id="4V83">
    <property type="method" value="X-ray"/>
    <property type="resolution" value="3.50 A"/>
    <property type="chains" value="BM/DM=6-141"/>
</dbReference>
<dbReference type="PDB" id="4V84">
    <property type="method" value="X-ray"/>
    <property type="resolution" value="3.40 A"/>
    <property type="chains" value="BM/DM=6-141"/>
</dbReference>
<dbReference type="PDB" id="4V9J">
    <property type="method" value="X-ray"/>
    <property type="resolution" value="3.86 A"/>
    <property type="chains" value="BQ/DQ=1-141"/>
</dbReference>
<dbReference type="PDB" id="4V9K">
    <property type="method" value="X-ray"/>
    <property type="resolution" value="3.50 A"/>
    <property type="chains" value="BQ/DQ=1-141"/>
</dbReference>
<dbReference type="PDB" id="4V9L">
    <property type="method" value="X-ray"/>
    <property type="resolution" value="3.50 A"/>
    <property type="chains" value="BQ/DQ=1-141"/>
</dbReference>
<dbReference type="PDB" id="4V9M">
    <property type="method" value="X-ray"/>
    <property type="resolution" value="4.00 A"/>
    <property type="chains" value="BQ/DQ=1-141"/>
</dbReference>
<dbReference type="PDB" id="4V9N">
    <property type="method" value="X-ray"/>
    <property type="resolution" value="3.40 A"/>
    <property type="chains" value="BQ/DQ=6-139"/>
</dbReference>
<dbReference type="PDB" id="4V9Q">
    <property type="method" value="X-ray"/>
    <property type="resolution" value="3.40 A"/>
    <property type="chains" value="AM/CM=6-139"/>
</dbReference>
<dbReference type="PDB" id="4W29">
    <property type="method" value="X-ray"/>
    <property type="resolution" value="3.80 A"/>
    <property type="chains" value="BQ/DQ=1-141"/>
</dbReference>
<dbReference type="PDB" id="4XEJ">
    <property type="method" value="X-ray"/>
    <property type="resolution" value="3.80 A"/>
    <property type="chains" value="AL16/BL16=6-139"/>
</dbReference>
<dbReference type="PDB" id="5J4D">
    <property type="method" value="X-ray"/>
    <property type="resolution" value="3.10 A"/>
    <property type="chains" value="N/SB=1-141"/>
</dbReference>
<dbReference type="PDB" id="5V8I">
    <property type="method" value="X-ray"/>
    <property type="resolution" value="3.25 A"/>
    <property type="chains" value="1Q/2Q=1-141"/>
</dbReference>
<dbReference type="PDB" id="6B4V">
    <property type="method" value="X-ray"/>
    <property type="resolution" value="3.40 A"/>
    <property type="chains" value="N/RB=1-141"/>
</dbReference>
<dbReference type="PDB" id="6BOH">
    <property type="method" value="X-ray"/>
    <property type="resolution" value="3.40 A"/>
    <property type="chains" value="N/SB=1-141"/>
</dbReference>
<dbReference type="PDB" id="6BOK">
    <property type="method" value="X-ray"/>
    <property type="resolution" value="3.55 A"/>
    <property type="chains" value="N/QB=1-141"/>
</dbReference>
<dbReference type="PDB" id="6N1D">
    <property type="method" value="X-ray"/>
    <property type="resolution" value="3.20 A"/>
    <property type="chains" value="AL16/BL16=1-141"/>
</dbReference>
<dbReference type="PDBsum" id="4V4I"/>
<dbReference type="PDBsum" id="4V4J"/>
<dbReference type="PDBsum" id="4V63"/>
<dbReference type="PDBsum" id="4V67"/>
<dbReference type="PDBsum" id="4V7P"/>
<dbReference type="PDBsum" id="4V83"/>
<dbReference type="PDBsum" id="4V84"/>
<dbReference type="PDBsum" id="4V9J"/>
<dbReference type="PDBsum" id="4V9K"/>
<dbReference type="PDBsum" id="4V9L"/>
<dbReference type="PDBsum" id="4V9M"/>
<dbReference type="PDBsum" id="4V9N"/>
<dbReference type="PDBsum" id="4V9Q"/>
<dbReference type="PDBsum" id="4W29"/>
<dbReference type="PDBsum" id="4XEJ"/>
<dbReference type="PDBsum" id="5J4D"/>
<dbReference type="PDBsum" id="5V8I"/>
<dbReference type="PDBsum" id="6B4V"/>
<dbReference type="PDBsum" id="6BOH"/>
<dbReference type="PDBsum" id="6BOK"/>
<dbReference type="PDBsum" id="6N1D"/>
<dbReference type="BMRB" id="Q72I11"/>
<dbReference type="SMR" id="Q72I11"/>
<dbReference type="IntAct" id="Q72I11">
    <property type="interactions" value="4"/>
</dbReference>
<dbReference type="KEGG" id="tth:TT_C1321"/>
<dbReference type="eggNOG" id="COG0197">
    <property type="taxonomic scope" value="Bacteria"/>
</dbReference>
<dbReference type="HOGENOM" id="CLU_078858_2_1_0"/>
<dbReference type="OrthoDB" id="9802589at2"/>
<dbReference type="Proteomes" id="UP000000592">
    <property type="component" value="Chromosome"/>
</dbReference>
<dbReference type="GO" id="GO:0022625">
    <property type="term" value="C:cytosolic large ribosomal subunit"/>
    <property type="evidence" value="ECO:0007669"/>
    <property type="project" value="TreeGrafter"/>
</dbReference>
<dbReference type="GO" id="GO:0019843">
    <property type="term" value="F:rRNA binding"/>
    <property type="evidence" value="ECO:0007669"/>
    <property type="project" value="UniProtKB-UniRule"/>
</dbReference>
<dbReference type="GO" id="GO:0003735">
    <property type="term" value="F:structural constituent of ribosome"/>
    <property type="evidence" value="ECO:0007669"/>
    <property type="project" value="InterPro"/>
</dbReference>
<dbReference type="GO" id="GO:0000049">
    <property type="term" value="F:tRNA binding"/>
    <property type="evidence" value="ECO:0007669"/>
    <property type="project" value="UniProtKB-KW"/>
</dbReference>
<dbReference type="GO" id="GO:0006412">
    <property type="term" value="P:translation"/>
    <property type="evidence" value="ECO:0007669"/>
    <property type="project" value="UniProtKB-UniRule"/>
</dbReference>
<dbReference type="CDD" id="cd01433">
    <property type="entry name" value="Ribosomal_L16_L10e"/>
    <property type="match status" value="1"/>
</dbReference>
<dbReference type="FunFam" id="3.90.1170.10:FF:000001">
    <property type="entry name" value="50S ribosomal protein L16"/>
    <property type="match status" value="1"/>
</dbReference>
<dbReference type="Gene3D" id="3.90.1170.10">
    <property type="entry name" value="Ribosomal protein L10e/L16"/>
    <property type="match status" value="1"/>
</dbReference>
<dbReference type="HAMAP" id="MF_01342">
    <property type="entry name" value="Ribosomal_uL16"/>
    <property type="match status" value="1"/>
</dbReference>
<dbReference type="InterPro" id="IPR047873">
    <property type="entry name" value="Ribosomal_uL16"/>
</dbReference>
<dbReference type="InterPro" id="IPR000114">
    <property type="entry name" value="Ribosomal_uL16_bact-type"/>
</dbReference>
<dbReference type="InterPro" id="IPR016180">
    <property type="entry name" value="Ribosomal_uL16_dom"/>
</dbReference>
<dbReference type="InterPro" id="IPR036920">
    <property type="entry name" value="Ribosomal_uL16_sf"/>
</dbReference>
<dbReference type="NCBIfam" id="TIGR01164">
    <property type="entry name" value="rplP_bact"/>
    <property type="match status" value="1"/>
</dbReference>
<dbReference type="PANTHER" id="PTHR12220">
    <property type="entry name" value="50S/60S RIBOSOMAL PROTEIN L16"/>
    <property type="match status" value="1"/>
</dbReference>
<dbReference type="PANTHER" id="PTHR12220:SF13">
    <property type="entry name" value="LARGE RIBOSOMAL SUBUNIT PROTEIN UL16M"/>
    <property type="match status" value="1"/>
</dbReference>
<dbReference type="Pfam" id="PF00252">
    <property type="entry name" value="Ribosomal_L16"/>
    <property type="match status" value="1"/>
</dbReference>
<dbReference type="PRINTS" id="PR00060">
    <property type="entry name" value="RIBOSOMALL16"/>
</dbReference>
<dbReference type="SUPFAM" id="SSF54686">
    <property type="entry name" value="Ribosomal protein L16p/L10e"/>
    <property type="match status" value="1"/>
</dbReference>
<gene>
    <name evidence="1" type="primary">rplP</name>
    <name type="ordered locus">TT_C1321</name>
</gene>
<comment type="function">
    <text evidence="1">Binds 23S rRNA and is also seen to make contacts with the A and possibly P site tRNAs.</text>
</comment>
<comment type="subunit">
    <text evidence="1">Part of the 50S ribosomal subunit.</text>
</comment>
<comment type="similarity">
    <text evidence="1">Belongs to the universal ribosomal protein uL16 family.</text>
</comment>
<protein>
    <recommendedName>
        <fullName evidence="1">Large ribosomal subunit protein uL16</fullName>
    </recommendedName>
    <alternativeName>
        <fullName evidence="2">50S ribosomal protein L16</fullName>
    </alternativeName>
</protein>
<accession>Q72I11</accession>
<reference key="1">
    <citation type="journal article" date="2004" name="Nat. Biotechnol.">
        <title>The genome sequence of the extreme thermophile Thermus thermophilus.</title>
        <authorList>
            <person name="Henne A."/>
            <person name="Brueggemann H."/>
            <person name="Raasch C."/>
            <person name="Wiezer A."/>
            <person name="Hartsch T."/>
            <person name="Liesegang H."/>
            <person name="Johann A."/>
            <person name="Lienard T."/>
            <person name="Gohl O."/>
            <person name="Martinez-Arias R."/>
            <person name="Jacobi C."/>
            <person name="Starkuviene V."/>
            <person name="Schlenczeck S."/>
            <person name="Dencker S."/>
            <person name="Huber R."/>
            <person name="Klenk H.-P."/>
            <person name="Kramer W."/>
            <person name="Merkl R."/>
            <person name="Gottschalk G."/>
            <person name="Fritz H.-J."/>
        </authorList>
    </citation>
    <scope>NUCLEOTIDE SEQUENCE [LARGE SCALE GENOMIC DNA]</scope>
    <source>
        <strain>ATCC BAA-163 / DSM 7039 / HB27</strain>
    </source>
</reference>
<name>RL16_THET2</name>
<proteinExistence type="evidence at protein level"/>
<organism>
    <name type="scientific">Thermus thermophilus (strain ATCC BAA-163 / DSM 7039 / HB27)</name>
    <dbReference type="NCBI Taxonomy" id="262724"/>
    <lineage>
        <taxon>Bacteria</taxon>
        <taxon>Thermotogati</taxon>
        <taxon>Deinococcota</taxon>
        <taxon>Deinococci</taxon>
        <taxon>Thermales</taxon>
        <taxon>Thermaceae</taxon>
        <taxon>Thermus</taxon>
    </lineage>
</organism>
<keyword id="KW-0002">3D-structure</keyword>
<keyword id="KW-0687">Ribonucleoprotein</keyword>
<keyword id="KW-0689">Ribosomal protein</keyword>
<keyword id="KW-0694">RNA-binding</keyword>
<keyword id="KW-0699">rRNA-binding</keyword>
<keyword id="KW-0820">tRNA-binding</keyword>